<dbReference type="EC" id="2.3.2.27" evidence="3"/>
<dbReference type="EMBL" id="AL132975">
    <property type="protein sequence ID" value="CAB75911.1"/>
    <property type="molecule type" value="Genomic_DNA"/>
</dbReference>
<dbReference type="EMBL" id="CP002686">
    <property type="protein sequence ID" value="AEE79397.1"/>
    <property type="molecule type" value="Genomic_DNA"/>
</dbReference>
<dbReference type="EMBL" id="AF386995">
    <property type="protein sequence ID" value="AAK62440.1"/>
    <property type="molecule type" value="mRNA"/>
</dbReference>
<dbReference type="EMBL" id="BT006305">
    <property type="protein sequence ID" value="AAP13413.1"/>
    <property type="molecule type" value="mRNA"/>
</dbReference>
<dbReference type="EMBL" id="AK317055">
    <property type="protein sequence ID" value="BAH19748.1"/>
    <property type="molecule type" value="mRNA"/>
</dbReference>
<dbReference type="PIR" id="T47692">
    <property type="entry name" value="T47692"/>
</dbReference>
<dbReference type="RefSeq" id="NP_191112.1">
    <property type="nucleotide sequence ID" value="NM_115410.3"/>
</dbReference>
<dbReference type="SMR" id="Q9M2S6"/>
<dbReference type="BioGRID" id="10034">
    <property type="interactions" value="3"/>
</dbReference>
<dbReference type="FunCoup" id="Q9M2S6">
    <property type="interactions" value="889"/>
</dbReference>
<dbReference type="IntAct" id="Q9M2S6">
    <property type="interactions" value="3"/>
</dbReference>
<dbReference type="STRING" id="3702.Q9M2S6"/>
<dbReference type="PaxDb" id="3702-AT3G55530.1"/>
<dbReference type="ProteomicsDB" id="232947"/>
<dbReference type="EnsemblPlants" id="AT3G55530.1">
    <property type="protein sequence ID" value="AT3G55530.1"/>
    <property type="gene ID" value="AT3G55530"/>
</dbReference>
<dbReference type="GeneID" id="824718"/>
<dbReference type="Gramene" id="AT3G55530.1">
    <property type="protein sequence ID" value="AT3G55530.1"/>
    <property type="gene ID" value="AT3G55530"/>
</dbReference>
<dbReference type="KEGG" id="ath:AT3G55530"/>
<dbReference type="Araport" id="AT3G55530"/>
<dbReference type="TAIR" id="AT3G55530">
    <property type="gene designation" value="SDIR1"/>
</dbReference>
<dbReference type="eggNOG" id="KOG0800">
    <property type="taxonomic scope" value="Eukaryota"/>
</dbReference>
<dbReference type="HOGENOM" id="CLU_071713_0_0_1"/>
<dbReference type="InParanoid" id="Q9M2S6"/>
<dbReference type="OMA" id="INANPMA"/>
<dbReference type="PhylomeDB" id="Q9M2S6"/>
<dbReference type="PRO" id="PR:Q9M2S6"/>
<dbReference type="Proteomes" id="UP000006548">
    <property type="component" value="Chromosome 3"/>
</dbReference>
<dbReference type="ExpressionAtlas" id="Q9M2S6">
    <property type="expression patterns" value="baseline and differential"/>
</dbReference>
<dbReference type="GO" id="GO:0005789">
    <property type="term" value="C:endoplasmic reticulum membrane"/>
    <property type="evidence" value="ECO:0000314"/>
    <property type="project" value="TAIR"/>
</dbReference>
<dbReference type="GO" id="GO:0043231">
    <property type="term" value="C:intracellular membrane-bounded organelle"/>
    <property type="evidence" value="ECO:0000314"/>
    <property type="project" value="TAIR"/>
</dbReference>
<dbReference type="GO" id="GO:0061630">
    <property type="term" value="F:ubiquitin protein ligase activity"/>
    <property type="evidence" value="ECO:0000314"/>
    <property type="project" value="TAIR"/>
</dbReference>
<dbReference type="GO" id="GO:0004842">
    <property type="term" value="F:ubiquitin-protein transferase activity"/>
    <property type="evidence" value="ECO:0000314"/>
    <property type="project" value="TAIR"/>
</dbReference>
<dbReference type="GO" id="GO:0008270">
    <property type="term" value="F:zinc ion binding"/>
    <property type="evidence" value="ECO:0007669"/>
    <property type="project" value="UniProtKB-KW"/>
</dbReference>
<dbReference type="GO" id="GO:0009789">
    <property type="term" value="P:positive regulation of abscisic acid-activated signaling pathway"/>
    <property type="evidence" value="ECO:0000315"/>
    <property type="project" value="TAIR"/>
</dbReference>
<dbReference type="GO" id="GO:0016567">
    <property type="term" value="P:protein ubiquitination"/>
    <property type="evidence" value="ECO:0000314"/>
    <property type="project" value="UniProtKB"/>
</dbReference>
<dbReference type="GO" id="GO:0009737">
    <property type="term" value="P:response to abscisic acid"/>
    <property type="evidence" value="ECO:0000270"/>
    <property type="project" value="TAIR"/>
</dbReference>
<dbReference type="GO" id="GO:0009651">
    <property type="term" value="P:response to salt stress"/>
    <property type="evidence" value="ECO:0000270"/>
    <property type="project" value="TAIR"/>
</dbReference>
<dbReference type="GO" id="GO:0009414">
    <property type="term" value="P:response to water deprivation"/>
    <property type="evidence" value="ECO:0000270"/>
    <property type="project" value="TAIR"/>
</dbReference>
<dbReference type="GO" id="GO:0006511">
    <property type="term" value="P:ubiquitin-dependent protein catabolic process"/>
    <property type="evidence" value="ECO:0000315"/>
    <property type="project" value="TAIR"/>
</dbReference>
<dbReference type="CDD" id="cd16454">
    <property type="entry name" value="RING-H2_PA-TM-RING"/>
    <property type="match status" value="1"/>
</dbReference>
<dbReference type="FunFam" id="3.30.40.10:FF:000677">
    <property type="entry name" value="E3 ubiquitin-protein ligase SDIR1"/>
    <property type="match status" value="1"/>
</dbReference>
<dbReference type="Gene3D" id="3.30.40.10">
    <property type="entry name" value="Zinc/RING finger domain, C3HC4 (zinc finger)"/>
    <property type="match status" value="1"/>
</dbReference>
<dbReference type="InterPro" id="IPR001841">
    <property type="entry name" value="Znf_RING"/>
</dbReference>
<dbReference type="InterPro" id="IPR013083">
    <property type="entry name" value="Znf_RING/FYVE/PHD"/>
</dbReference>
<dbReference type="PANTHER" id="PTHR45977:SF4">
    <property type="entry name" value="RING-TYPE DOMAIN-CONTAINING PROTEIN"/>
    <property type="match status" value="1"/>
</dbReference>
<dbReference type="PANTHER" id="PTHR45977">
    <property type="entry name" value="TARGET OF ERK KINASE MPK-1"/>
    <property type="match status" value="1"/>
</dbReference>
<dbReference type="Pfam" id="PF13639">
    <property type="entry name" value="zf-RING_2"/>
    <property type="match status" value="1"/>
</dbReference>
<dbReference type="SMART" id="SM00184">
    <property type="entry name" value="RING"/>
    <property type="match status" value="1"/>
</dbReference>
<dbReference type="SUPFAM" id="SSF57850">
    <property type="entry name" value="RING/U-box"/>
    <property type="match status" value="1"/>
</dbReference>
<dbReference type="PROSITE" id="PS50089">
    <property type="entry name" value="ZF_RING_2"/>
    <property type="match status" value="1"/>
</dbReference>
<accession>Q9M2S6</accession>
<evidence type="ECO:0000255" key="1"/>
<evidence type="ECO:0000255" key="2">
    <source>
        <dbReference type="PROSITE-ProRule" id="PRU00175"/>
    </source>
</evidence>
<evidence type="ECO:0000269" key="3">
    <source>
    </source>
</evidence>
<evidence type="ECO:0000269" key="4">
    <source>
    </source>
</evidence>
<evidence type="ECO:0000269" key="5">
    <source>
    </source>
</evidence>
<evidence type="ECO:0000269" key="6">
    <source>
    </source>
</evidence>
<evidence type="ECO:0000303" key="7">
    <source>
    </source>
</evidence>
<evidence type="ECO:0000305" key="8"/>
<evidence type="ECO:0000305" key="9">
    <source>
    </source>
</evidence>
<evidence type="ECO:0000305" key="10">
    <source>
    </source>
</evidence>
<feature type="chain" id="PRO_0000395672" description="E3 ubiquitin-protein ligase SDIR1">
    <location>
        <begin position="1"/>
        <end position="273"/>
    </location>
</feature>
<feature type="topological domain" description="Cytoplasmic" evidence="10">
    <location>
        <begin position="1"/>
        <end position="33"/>
    </location>
</feature>
<feature type="transmembrane region" description="Helical" evidence="1">
    <location>
        <begin position="34"/>
        <end position="54"/>
    </location>
</feature>
<feature type="topological domain" description="Lumenal" evidence="10">
    <location>
        <begin position="55"/>
        <end position="56"/>
    </location>
</feature>
<feature type="transmembrane region" description="Helical" evidence="1">
    <location>
        <begin position="57"/>
        <end position="77"/>
    </location>
</feature>
<feature type="topological domain" description="Cytoplasmic" evidence="6">
    <location>
        <begin position="78"/>
        <end position="273"/>
    </location>
</feature>
<feature type="zinc finger region" description="RING-type; atypical" evidence="2">
    <location>
        <begin position="211"/>
        <end position="252"/>
    </location>
</feature>
<feature type="mutagenesis site" description="Loss of ubiquitin-protein ligase activity." evidence="3">
    <original>H</original>
    <variation>Y</variation>
    <location>
        <position position="234"/>
    </location>
</feature>
<reference key="1">
    <citation type="journal article" date="2000" name="Nature">
        <title>Sequence and analysis of chromosome 3 of the plant Arabidopsis thaliana.</title>
        <authorList>
            <person name="Salanoubat M."/>
            <person name="Lemcke K."/>
            <person name="Rieger M."/>
            <person name="Ansorge W."/>
            <person name="Unseld M."/>
            <person name="Fartmann B."/>
            <person name="Valle G."/>
            <person name="Bloecker H."/>
            <person name="Perez-Alonso M."/>
            <person name="Obermaier B."/>
            <person name="Delseny M."/>
            <person name="Boutry M."/>
            <person name="Grivell L.A."/>
            <person name="Mache R."/>
            <person name="Puigdomenech P."/>
            <person name="De Simone V."/>
            <person name="Choisne N."/>
            <person name="Artiguenave F."/>
            <person name="Robert C."/>
            <person name="Brottier P."/>
            <person name="Wincker P."/>
            <person name="Cattolico L."/>
            <person name="Weissenbach J."/>
            <person name="Saurin W."/>
            <person name="Quetier F."/>
            <person name="Schaefer M."/>
            <person name="Mueller-Auer S."/>
            <person name="Gabel C."/>
            <person name="Fuchs M."/>
            <person name="Benes V."/>
            <person name="Wurmbach E."/>
            <person name="Drzonek H."/>
            <person name="Erfle H."/>
            <person name="Jordan N."/>
            <person name="Bangert S."/>
            <person name="Wiedelmann R."/>
            <person name="Kranz H."/>
            <person name="Voss H."/>
            <person name="Holland R."/>
            <person name="Brandt P."/>
            <person name="Nyakatura G."/>
            <person name="Vezzi A."/>
            <person name="D'Angelo M."/>
            <person name="Pallavicini A."/>
            <person name="Toppo S."/>
            <person name="Simionati B."/>
            <person name="Conrad A."/>
            <person name="Hornischer K."/>
            <person name="Kauer G."/>
            <person name="Loehnert T.-H."/>
            <person name="Nordsiek G."/>
            <person name="Reichelt J."/>
            <person name="Scharfe M."/>
            <person name="Schoen O."/>
            <person name="Bargues M."/>
            <person name="Terol J."/>
            <person name="Climent J."/>
            <person name="Navarro P."/>
            <person name="Collado C."/>
            <person name="Perez-Perez A."/>
            <person name="Ottenwaelder B."/>
            <person name="Duchemin D."/>
            <person name="Cooke R."/>
            <person name="Laudie M."/>
            <person name="Berger-Llauro C."/>
            <person name="Purnelle B."/>
            <person name="Masuy D."/>
            <person name="de Haan M."/>
            <person name="Maarse A.C."/>
            <person name="Alcaraz J.-P."/>
            <person name="Cottet A."/>
            <person name="Casacuberta E."/>
            <person name="Monfort A."/>
            <person name="Argiriou A."/>
            <person name="Flores M."/>
            <person name="Liguori R."/>
            <person name="Vitale D."/>
            <person name="Mannhaupt G."/>
            <person name="Haase D."/>
            <person name="Schoof H."/>
            <person name="Rudd S."/>
            <person name="Zaccaria P."/>
            <person name="Mewes H.-W."/>
            <person name="Mayer K.F.X."/>
            <person name="Kaul S."/>
            <person name="Town C.D."/>
            <person name="Koo H.L."/>
            <person name="Tallon L.J."/>
            <person name="Jenkins J."/>
            <person name="Rooney T."/>
            <person name="Rizzo M."/>
            <person name="Walts A."/>
            <person name="Utterback T."/>
            <person name="Fujii C.Y."/>
            <person name="Shea T.P."/>
            <person name="Creasy T.H."/>
            <person name="Haas B."/>
            <person name="Maiti R."/>
            <person name="Wu D."/>
            <person name="Peterson J."/>
            <person name="Van Aken S."/>
            <person name="Pai G."/>
            <person name="Militscher J."/>
            <person name="Sellers P."/>
            <person name="Gill J.E."/>
            <person name="Feldblyum T.V."/>
            <person name="Preuss D."/>
            <person name="Lin X."/>
            <person name="Nierman W.C."/>
            <person name="Salzberg S.L."/>
            <person name="White O."/>
            <person name="Venter J.C."/>
            <person name="Fraser C.M."/>
            <person name="Kaneko T."/>
            <person name="Nakamura Y."/>
            <person name="Sato S."/>
            <person name="Kato T."/>
            <person name="Asamizu E."/>
            <person name="Sasamoto S."/>
            <person name="Kimura T."/>
            <person name="Idesawa K."/>
            <person name="Kawashima K."/>
            <person name="Kishida Y."/>
            <person name="Kiyokawa C."/>
            <person name="Kohara M."/>
            <person name="Matsumoto M."/>
            <person name="Matsuno A."/>
            <person name="Muraki A."/>
            <person name="Nakayama S."/>
            <person name="Nakazaki N."/>
            <person name="Shinpo S."/>
            <person name="Takeuchi C."/>
            <person name="Wada T."/>
            <person name="Watanabe A."/>
            <person name="Yamada M."/>
            <person name="Yasuda M."/>
            <person name="Tabata S."/>
        </authorList>
    </citation>
    <scope>NUCLEOTIDE SEQUENCE [LARGE SCALE GENOMIC DNA]</scope>
    <source>
        <strain>cv. Columbia</strain>
    </source>
</reference>
<reference key="2">
    <citation type="journal article" date="2017" name="Plant J.">
        <title>Araport11: a complete reannotation of the Arabidopsis thaliana reference genome.</title>
        <authorList>
            <person name="Cheng C.Y."/>
            <person name="Krishnakumar V."/>
            <person name="Chan A.P."/>
            <person name="Thibaud-Nissen F."/>
            <person name="Schobel S."/>
            <person name="Town C.D."/>
        </authorList>
    </citation>
    <scope>GENOME REANNOTATION</scope>
    <source>
        <strain>cv. Columbia</strain>
    </source>
</reference>
<reference key="3">
    <citation type="journal article" date="2003" name="Science">
        <title>Empirical analysis of transcriptional activity in the Arabidopsis genome.</title>
        <authorList>
            <person name="Yamada K."/>
            <person name="Lim J."/>
            <person name="Dale J.M."/>
            <person name="Chen H."/>
            <person name="Shinn P."/>
            <person name="Palm C.J."/>
            <person name="Southwick A.M."/>
            <person name="Wu H.C."/>
            <person name="Kim C.J."/>
            <person name="Nguyen M."/>
            <person name="Pham P.K."/>
            <person name="Cheuk R.F."/>
            <person name="Karlin-Newmann G."/>
            <person name="Liu S.X."/>
            <person name="Lam B."/>
            <person name="Sakano H."/>
            <person name="Wu T."/>
            <person name="Yu G."/>
            <person name="Miranda M."/>
            <person name="Quach H.L."/>
            <person name="Tripp M."/>
            <person name="Chang C.H."/>
            <person name="Lee J.M."/>
            <person name="Toriumi M.J."/>
            <person name="Chan M.M."/>
            <person name="Tang C.C."/>
            <person name="Onodera C.S."/>
            <person name="Deng J.M."/>
            <person name="Akiyama K."/>
            <person name="Ansari Y."/>
            <person name="Arakawa T."/>
            <person name="Banh J."/>
            <person name="Banno F."/>
            <person name="Bowser L."/>
            <person name="Brooks S.Y."/>
            <person name="Carninci P."/>
            <person name="Chao Q."/>
            <person name="Choy N."/>
            <person name="Enju A."/>
            <person name="Goldsmith A.D."/>
            <person name="Gurjal M."/>
            <person name="Hansen N.F."/>
            <person name="Hayashizaki Y."/>
            <person name="Johnson-Hopson C."/>
            <person name="Hsuan V.W."/>
            <person name="Iida K."/>
            <person name="Karnes M."/>
            <person name="Khan S."/>
            <person name="Koesema E."/>
            <person name="Ishida J."/>
            <person name="Jiang P.X."/>
            <person name="Jones T."/>
            <person name="Kawai J."/>
            <person name="Kamiya A."/>
            <person name="Meyers C."/>
            <person name="Nakajima M."/>
            <person name="Narusaka M."/>
            <person name="Seki M."/>
            <person name="Sakurai T."/>
            <person name="Satou M."/>
            <person name="Tamse R."/>
            <person name="Vaysberg M."/>
            <person name="Wallender E.K."/>
            <person name="Wong C."/>
            <person name="Yamamura Y."/>
            <person name="Yuan S."/>
            <person name="Shinozaki K."/>
            <person name="Davis R.W."/>
            <person name="Theologis A."/>
            <person name="Ecker J.R."/>
        </authorList>
    </citation>
    <scope>NUCLEOTIDE SEQUENCE [LARGE SCALE MRNA]</scope>
    <source>
        <strain>cv. Columbia</strain>
    </source>
</reference>
<reference key="4">
    <citation type="journal article" date="2009" name="DNA Res.">
        <title>Analysis of multiple occurrences of alternative splicing events in Arabidopsis thaliana using novel sequenced full-length cDNAs.</title>
        <authorList>
            <person name="Iida K."/>
            <person name="Fukami-Kobayashi K."/>
            <person name="Toyoda A."/>
            <person name="Sakaki Y."/>
            <person name="Kobayashi M."/>
            <person name="Seki M."/>
            <person name="Shinozaki K."/>
        </authorList>
    </citation>
    <scope>NUCLEOTIDE SEQUENCE [LARGE SCALE MRNA]</scope>
    <source>
        <strain>cv. Columbia</strain>
    </source>
</reference>
<reference key="5">
    <citation type="journal article" date="2007" name="Plant Cell">
        <title>SDIR1 is a RING finger E3 ligase that positively regulates stress-responsive abscisic acid signaling in Arabidopsis.</title>
        <authorList>
            <person name="Zhang Y."/>
            <person name="Yang C."/>
            <person name="Li Y."/>
            <person name="Zheng N."/>
            <person name="Chen H."/>
            <person name="Zhao Q."/>
            <person name="Gao T."/>
            <person name="Guo H."/>
            <person name="Xie Q."/>
        </authorList>
    </citation>
    <scope>FUNCTION</scope>
    <scope>INDUCTION BY DROUGHT AND SALT</scope>
    <scope>TISSUE SPECIFICITY</scope>
    <scope>DEVELOPMENTAL STAGE</scope>
    <scope>DOMAIN</scope>
    <scope>MUTAGENESIS OF HIS-234</scope>
    <scope>DISRUPTION PHENOTYPE</scope>
</reference>
<reference key="6">
    <citation type="journal article" date="2008" name="Biosci. Biotechnol. Biochem.">
        <title>Arabidopsis SDIR1 enhances drought tolerance in crop plants.</title>
        <authorList>
            <person name="Zhang Y.Y."/>
            <person name="Li Y."/>
            <person name="Gao T."/>
            <person name="Zhu H."/>
            <person name="Wang D.J."/>
            <person name="Zhang H.W."/>
            <person name="Ning Y.S."/>
            <person name="Liu L.J."/>
            <person name="Wu Y.R."/>
            <person name="Chu C.C."/>
            <person name="Guo H.S."/>
            <person name="Xie Q."/>
        </authorList>
    </citation>
    <scope>FUNCTION</scope>
</reference>
<reference key="7">
    <citation type="journal article" date="2008" name="Mol. Plant Microbe Interact.">
        <title>The root-colonizing endophyte Pirifomospora indica confers drought tolerance in Arabidopsis by stimulating the expression of drought stress-related genes in leaves.</title>
        <authorList>
            <person name="Sherameti I."/>
            <person name="Tripathi S."/>
            <person name="Varma A."/>
            <person name="Oelmuller R."/>
        </authorList>
    </citation>
    <scope>INDUCTION BY DROUGHT</scope>
</reference>
<reference key="8">
    <citation type="journal article" date="2015" name="Plant Cell">
        <title>The RING finger ubiquitin E3 ligase SDIR1 targets SDIR1-INTERACTING PROTEIN1 for degradation to modulate the salt stress response and ABA signaling in Arabidopsis.</title>
        <authorList>
            <person name="Zhang H."/>
            <person name="Cui F."/>
            <person name="Wu Y."/>
            <person name="Lou L."/>
            <person name="Liu L."/>
            <person name="Tian M."/>
            <person name="Ning Y."/>
            <person name="Shu K."/>
            <person name="Tang S."/>
            <person name="Xie Q."/>
        </authorList>
    </citation>
    <scope>FUNCTION</scope>
    <scope>INTERACTION WITH ATP1/SDIRIP1</scope>
    <scope>SUBCELLULAR LOCATION</scope>
    <scope>TOPOLOGY</scope>
</reference>
<sequence length="273" mass="30184">MSFVFRGSRGDLESGFSGGFLPERRAMRVHGARPVNSNSLAFLVTVLLLFMILNSHQMPPNFLLWLVLGVFLMATTLRMYATCQQLQAHAQAQAAAASGLFSHTELRLHVPPSIALATRGRLQGLRLQLALLDREFDDLDYETLRALDSDNVSTTSMSEEEINALPVHKYKVLDPENGCSLAKQASTSSSAEKMLDSANESKKGTEDELTCSVCLEQVTVGEIVRTLPCLHQFHAGCIDPWLRQQGTCPVCKFRAHSGWQEQDEIDDDASDMV</sequence>
<keyword id="KW-0256">Endoplasmic reticulum</keyword>
<keyword id="KW-0472">Membrane</keyword>
<keyword id="KW-0479">Metal-binding</keyword>
<keyword id="KW-1185">Reference proteome</keyword>
<keyword id="KW-0808">Transferase</keyword>
<keyword id="KW-0812">Transmembrane</keyword>
<keyword id="KW-1133">Transmembrane helix</keyword>
<keyword id="KW-0833">Ubl conjugation pathway</keyword>
<keyword id="KW-0862">Zinc</keyword>
<keyword id="KW-0863">Zinc-finger</keyword>
<name>SDIR1_ARATH</name>
<comment type="function">
    <text evidence="3 5 6">E3 ubiquitin-protein ligase that acts as a positive regulator of abscisic acid-related stress signal transduction (PubMed:17573536, PubMed:18685183). Interacts with and ubiquitinates ATP1/SDIRIP1 to modulate ATP1/SDIRIP1 stability through the 26S proteasome pathway. Regulates abscisic acid (ABA) and salt stress responses by negatively affecting ATP1/SDIRIP1 stability. The SDIR1-ATP1/SDIRIP1 complex plays an important role in ABA signaling through the ubiquitination pathway (PubMed:25616872).</text>
</comment>
<comment type="catalytic activity">
    <reaction evidence="3">
        <text>S-ubiquitinyl-[E2 ubiquitin-conjugating enzyme]-L-cysteine + [acceptor protein]-L-lysine = [E2 ubiquitin-conjugating enzyme]-L-cysteine + N(6)-ubiquitinyl-[acceptor protein]-L-lysine.</text>
        <dbReference type="EC" id="2.3.2.27"/>
    </reaction>
</comment>
<comment type="subunit">
    <text evidence="6">Interacts with ATP1/SDIRIP1.</text>
</comment>
<comment type="subcellular location">
    <subcellularLocation>
        <location evidence="6">Endoplasmic reticulum membrane</location>
        <topology evidence="1">Multi-pass membrane protein</topology>
    </subcellularLocation>
</comment>
<comment type="tissue specificity">
    <text evidence="3">Ubiquitous.</text>
</comment>
<comment type="developmental stage">
    <text evidence="3">Expressed at all developmental stages.</text>
</comment>
<comment type="induction">
    <text evidence="3 4">Up-regulated by salt and drought stress, but not by abscisic acid. The up-regulation is stronger and earlier when the roots are colonized by the endophytic fungus P.indica.</text>
</comment>
<comment type="domain">
    <text evidence="9">The RING-type zinc finger domain is required for E3 ligase activity.</text>
</comment>
<comment type="disruption phenotype">
    <text evidence="3">Longer primary root and NaCl and ABA insensitivity.</text>
</comment>
<proteinExistence type="evidence at protein level"/>
<gene>
    <name evidence="7" type="primary">SDIR1</name>
    <name type="ordered locus">At3g55530</name>
    <name type="ORF">T22E16.190</name>
</gene>
<organism>
    <name type="scientific">Arabidopsis thaliana</name>
    <name type="common">Mouse-ear cress</name>
    <dbReference type="NCBI Taxonomy" id="3702"/>
    <lineage>
        <taxon>Eukaryota</taxon>
        <taxon>Viridiplantae</taxon>
        <taxon>Streptophyta</taxon>
        <taxon>Embryophyta</taxon>
        <taxon>Tracheophyta</taxon>
        <taxon>Spermatophyta</taxon>
        <taxon>Magnoliopsida</taxon>
        <taxon>eudicotyledons</taxon>
        <taxon>Gunneridae</taxon>
        <taxon>Pentapetalae</taxon>
        <taxon>rosids</taxon>
        <taxon>malvids</taxon>
        <taxon>Brassicales</taxon>
        <taxon>Brassicaceae</taxon>
        <taxon>Camelineae</taxon>
        <taxon>Arabidopsis</taxon>
    </lineage>
</organism>
<protein>
    <recommendedName>
        <fullName evidence="8">E3 ubiquitin-protein ligase SDIR1</fullName>
        <ecNumber evidence="3">2.3.2.27</ecNumber>
    </recommendedName>
    <alternativeName>
        <fullName evidence="7">Protein SALT- AND DROUGHT-INDUCED RING FINGER 1</fullName>
    </alternativeName>
    <alternativeName>
        <fullName evidence="8">RING-type E3 ubiquitin transferase SDIR1</fullName>
    </alternativeName>
</protein>